<evidence type="ECO:0000269" key="1">
    <source>
    </source>
</evidence>
<evidence type="ECO:0000303" key="2">
    <source>
    </source>
</evidence>
<evidence type="ECO:0000305" key="3"/>
<gene>
    <name evidence="2" type="primary">mpl1</name>
    <name type="ORF">MAA_08819</name>
</gene>
<sequence>MAVPQVNGDVSPRPNSAFLQHLLAYPLISDSIHTVRANEYAQRSIKLGDSAYQTFAAPVLPWLAKPYEYVSPYVARADSLGDKTLDRIDERFPIVKKPTSDLYNDTRSLILFPYNKSIEGRDHIFDVYASEAKKIEQKGLVGQGKAAVSTAFVVSNETLGWLSSFLAAKKAEATTVVKEKVKQ</sequence>
<dbReference type="EMBL" id="ADNJ02000001">
    <property type="protein sequence ID" value="EFY95675.1"/>
    <property type="molecule type" value="Genomic_DNA"/>
</dbReference>
<dbReference type="RefSeq" id="XP_007825008.1">
    <property type="nucleotide sequence ID" value="XM_007826817.1"/>
</dbReference>
<dbReference type="GeneID" id="19263105"/>
<dbReference type="KEGG" id="maj:MAA_08819"/>
<dbReference type="HOGENOM" id="CLU_082150_0_0_1"/>
<dbReference type="OrthoDB" id="376826at2759"/>
<dbReference type="Proteomes" id="UP000002498">
    <property type="component" value="Unassembled WGS sequence"/>
</dbReference>
<reference key="1">
    <citation type="journal article" date="2011" name="PLoS Genet.">
        <title>Genome sequencing and comparative transcriptomics of the model entomopathogenic fungi Metarhizium anisopliae and M. acridum.</title>
        <authorList>
            <person name="Gao Q."/>
            <person name="Jin K."/>
            <person name="Ying S.-H."/>
            <person name="Zhang Y."/>
            <person name="Xiao G."/>
            <person name="Shang Y."/>
            <person name="Duan Z."/>
            <person name="Hu X."/>
            <person name="Xie X.-Q."/>
            <person name="Zhou G."/>
            <person name="Peng G."/>
            <person name="Luo Z."/>
            <person name="Huang W."/>
            <person name="Wang B."/>
            <person name="Fang W."/>
            <person name="Wang S."/>
            <person name="Zhong Y."/>
            <person name="Ma L.-J."/>
            <person name="St Leger R.J."/>
            <person name="Zhao G.-P."/>
            <person name="Pei Y."/>
            <person name="Feng M.-G."/>
            <person name="Xia Y."/>
            <person name="Wang C."/>
        </authorList>
    </citation>
    <scope>NUCLEOTIDE SEQUENCE [LARGE SCALE GENOMIC DNA]</scope>
    <source>
        <strain>ARSEF 23 / ATCC MYA-3075</strain>
    </source>
</reference>
<reference key="2">
    <citation type="journal article" date="2014" name="Proc. Natl. Acad. Sci. U.S.A.">
        <title>Trajectory and genomic determinants of fungal-pathogen speciation and host adaptation.</title>
        <authorList>
            <person name="Hu X."/>
            <person name="Xiao G."/>
            <person name="Zheng P."/>
            <person name="Shang Y."/>
            <person name="Su Y."/>
            <person name="Zhang X."/>
            <person name="Liu X."/>
            <person name="Zhan S."/>
            <person name="St Leger R.J."/>
            <person name="Wang C."/>
        </authorList>
    </citation>
    <scope>GENOME REANNOTATION</scope>
    <source>
        <strain>ARSEF 23 / ATCC MYA-3075</strain>
    </source>
</reference>
<reference key="3">
    <citation type="journal article" date="2007" name="J. Biol. Chem.">
        <title>The Metarhizium anisopliae Perilipin Homolog MPL1 Regulates Lipid Metabolism, Appressorial Turgor Pressure, and Virulence.</title>
        <authorList>
            <person name="Wang C."/>
            <person name="St Leger R.J."/>
        </authorList>
    </citation>
    <scope>FUNCTION</scope>
    <scope>INDUCTION</scope>
    <scope>SUBCELLULAR LOCATION</scope>
    <scope>DISRUPTION PHENOTYPE</scope>
</reference>
<keyword id="KW-0551">Lipid droplet</keyword>
<keyword id="KW-0843">Virulence</keyword>
<proteinExistence type="evidence at transcript level"/>
<comment type="function">
    <text evidence="1">Lipid droplet coating protein that regulates lipid metabolism, appressorial turgor pressure, and virulence (PubMed:17526497). Appressorial turgor pressure is important for breaching the insect cuticle during infection (PubMed:17526497).</text>
</comment>
<comment type="subcellular location">
    <subcellularLocation>
        <location evidence="1">Lipid droplet</location>
    </subcellularLocation>
</comment>
<comment type="induction">
    <text evidence="1">Predominantly expressed when Metarhizium robertsii is engaged in accumulating lipids.</text>
</comment>
<comment type="disruption phenotype">
    <text evidence="1">Leads to thinner hyphae, fewer lipid droplets (particularly in appressoria) and a decrease in total lipids (PubMed:17526497). Reduces dramatically turgor generation by appressoria and subsequent ability to breach insect cuticle (PubMed:17526497).</text>
</comment>
<comment type="similarity">
    <text evidence="3">Belongs to the perilipin family.</text>
</comment>
<feature type="chain" id="PRO_0000462502" description="Lipid droplet coating protein mpl1">
    <location>
        <begin position="1"/>
        <end position="183"/>
    </location>
</feature>
<accession>E9F970</accession>
<name>MPL1_METRA</name>
<organism>
    <name type="scientific">Metarhizium robertsii (strain ARSEF 23 / ATCC MYA-3075)</name>
    <name type="common">Metarhizium anisopliae (strain ARSEF 23)</name>
    <dbReference type="NCBI Taxonomy" id="655844"/>
    <lineage>
        <taxon>Eukaryota</taxon>
        <taxon>Fungi</taxon>
        <taxon>Dikarya</taxon>
        <taxon>Ascomycota</taxon>
        <taxon>Pezizomycotina</taxon>
        <taxon>Sordariomycetes</taxon>
        <taxon>Hypocreomycetidae</taxon>
        <taxon>Hypocreales</taxon>
        <taxon>Clavicipitaceae</taxon>
        <taxon>Metarhizium</taxon>
    </lineage>
</organism>
<protein>
    <recommendedName>
        <fullName evidence="2">Lipid droplet coating protein mpl1</fullName>
    </recommendedName>
    <alternativeName>
        <fullName evidence="2">Perilipin-like protein 1</fullName>
    </alternativeName>
</protein>